<name>CSN2_ENTFL</name>
<keyword id="KW-0002">3D-structure</keyword>
<keyword id="KW-0051">Antiviral defense</keyword>
<keyword id="KW-0106">Calcium</keyword>
<keyword id="KW-0238">DNA-binding</keyword>
<keyword id="KW-0479">Metal-binding</keyword>
<organism>
    <name type="scientific">Enterococcus faecalis</name>
    <name type="common">Streptococcus faecalis</name>
    <dbReference type="NCBI Taxonomy" id="1351"/>
    <lineage>
        <taxon>Bacteria</taxon>
        <taxon>Bacillati</taxon>
        <taxon>Bacillota</taxon>
        <taxon>Bacilli</taxon>
        <taxon>Lactobacillales</taxon>
        <taxon>Enterococcaceae</taxon>
        <taxon>Enterococcus</taxon>
    </lineage>
</organism>
<proteinExistence type="evidence at protein level"/>
<gene>
    <name type="primary">csn2</name>
    <name type="ORF">EFDG_01320</name>
</gene>
<feature type="chain" id="PRO_0000418341" description="CRISPR-associated protein Csn2">
    <location>
        <begin position="1"/>
        <end position="219"/>
    </location>
</feature>
<feature type="binding site" evidence="2">
    <location>
        <position position="118"/>
    </location>
    <ligand>
        <name>Ca(2+)</name>
        <dbReference type="ChEBI" id="CHEBI:29108"/>
        <label>1</label>
    </ligand>
</feature>
<feature type="binding site" evidence="2">
    <location>
        <position position="118"/>
    </location>
    <ligand>
        <name>Ca(2+)</name>
        <dbReference type="ChEBI" id="CHEBI:29108"/>
        <label>2</label>
    </ligand>
</feature>
<feature type="binding site" evidence="2">
    <location>
        <position position="122"/>
    </location>
    <ligand>
        <name>Ca(2+)</name>
        <dbReference type="ChEBI" id="CHEBI:29108"/>
        <label>1</label>
    </ligand>
</feature>
<feature type="binding site" evidence="2">
    <location>
        <position position="122"/>
    </location>
    <ligand>
        <name>Ca(2+)</name>
        <dbReference type="ChEBI" id="CHEBI:29108"/>
        <label>3</label>
    </ligand>
</feature>
<feature type="binding site" evidence="2">
    <location>
        <position position="123"/>
    </location>
    <ligand>
        <name>Ca(2+)</name>
        <dbReference type="ChEBI" id="CHEBI:29108"/>
        <label>1</label>
    </ligand>
</feature>
<feature type="binding site" evidence="2">
    <location>
        <position position="123"/>
    </location>
    <ligand>
        <name>Ca(2+)</name>
        <dbReference type="ChEBI" id="CHEBI:29108"/>
        <label>3</label>
    </ligand>
</feature>
<feature type="binding site" evidence="2">
    <location>
        <position position="128"/>
    </location>
    <ligand>
        <name>Ca(2+)</name>
        <dbReference type="ChEBI" id="CHEBI:29108"/>
        <label>1</label>
    </ligand>
</feature>
<feature type="binding site" evidence="2">
    <location>
        <position position="128"/>
    </location>
    <ligand>
        <name>Ca(2+)</name>
        <dbReference type="ChEBI" id="CHEBI:29108"/>
        <label>3</label>
    </ligand>
</feature>
<feature type="binding site" evidence="2">
    <location>
        <position position="132"/>
    </location>
    <ligand>
        <name>Ca(2+)</name>
        <dbReference type="ChEBI" id="CHEBI:29108"/>
        <label>3</label>
    </ligand>
</feature>
<feature type="binding site" evidence="2">
    <location>
        <position position="132"/>
    </location>
    <ligand>
        <name>Ca(2+)</name>
        <dbReference type="ChEBI" id="CHEBI:29108"/>
        <label>4</label>
    </ligand>
</feature>
<feature type="binding site" evidence="2">
    <location>
        <position position="138"/>
    </location>
    <ligand>
        <name>Ca(2+)</name>
        <dbReference type="ChEBI" id="CHEBI:29108"/>
        <label>2</label>
    </ligand>
</feature>
<feature type="binding site" evidence="2">
    <location>
        <position position="138"/>
    </location>
    <ligand>
        <name>Ca(2+)</name>
        <dbReference type="ChEBI" id="CHEBI:29108"/>
        <label>4</label>
    </ligand>
</feature>
<feature type="binding site" evidence="2">
    <location>
        <position position="142"/>
    </location>
    <ligand>
        <name>Ca(2+)</name>
        <dbReference type="ChEBI" id="CHEBI:29108"/>
        <label>2</label>
    </ligand>
</feature>
<feature type="binding site" evidence="2">
    <location>
        <position position="142"/>
    </location>
    <ligand>
        <name>Ca(2+)</name>
        <dbReference type="ChEBI" id="CHEBI:29108"/>
        <label>4</label>
    </ligand>
</feature>
<feature type="binding site" evidence="2">
    <location>
        <position position="150"/>
    </location>
    <ligand>
        <name>Ca(2+)</name>
        <dbReference type="ChEBI" id="CHEBI:29108"/>
        <label>2</label>
    </ligand>
</feature>
<feature type="binding site" evidence="2">
    <location>
        <position position="150"/>
    </location>
    <ligand>
        <name>Ca(2+)</name>
        <dbReference type="ChEBI" id="CHEBI:29108"/>
        <label>4</label>
    </ligand>
</feature>
<feature type="strand" evidence="4">
    <location>
        <begin position="3"/>
        <end position="10"/>
    </location>
</feature>
<feature type="strand" evidence="4">
    <location>
        <begin position="16"/>
        <end position="22"/>
    </location>
</feature>
<feature type="helix" evidence="4">
    <location>
        <begin position="25"/>
        <end position="37"/>
    </location>
</feature>
<feature type="helix" evidence="4">
    <location>
        <begin position="56"/>
        <end position="58"/>
    </location>
</feature>
<feature type="strand" evidence="4">
    <location>
        <begin position="59"/>
        <end position="63"/>
    </location>
</feature>
<feature type="turn" evidence="4">
    <location>
        <begin position="65"/>
        <end position="67"/>
    </location>
</feature>
<feature type="helix" evidence="4">
    <location>
        <begin position="73"/>
        <end position="88"/>
    </location>
</feature>
<feature type="helix" evidence="4">
    <location>
        <begin position="91"/>
        <end position="114"/>
    </location>
</feature>
<feature type="strand" evidence="4">
    <location>
        <begin position="115"/>
        <end position="117"/>
    </location>
</feature>
<feature type="helix" evidence="4">
    <location>
        <begin position="126"/>
        <end position="132"/>
    </location>
</feature>
<feature type="helix" evidence="4">
    <location>
        <begin position="144"/>
        <end position="157"/>
    </location>
</feature>
<feature type="strand" evidence="4">
    <location>
        <begin position="163"/>
        <end position="168"/>
    </location>
</feature>
<feature type="helix" evidence="4">
    <location>
        <begin position="169"/>
        <end position="172"/>
    </location>
</feature>
<feature type="helix" evidence="4">
    <location>
        <begin position="175"/>
        <end position="187"/>
    </location>
</feature>
<feature type="strand" evidence="4">
    <location>
        <begin position="192"/>
        <end position="198"/>
    </location>
</feature>
<feature type="strand" evidence="4">
    <location>
        <begin position="206"/>
        <end position="208"/>
    </location>
</feature>
<feature type="strand" evidence="4">
    <location>
        <begin position="210"/>
        <end position="212"/>
    </location>
</feature>
<reference key="1">
    <citation type="submission" date="2009-02" db="EMBL/GenBank/DDBJ databases">
        <title>The genome sequence of Enterococcus faecalis strain ATCC 4200.</title>
        <authorList>
            <consortium name="The Broad Institute Genome Sequencing Platform"/>
            <person name="Feldgarden M."/>
            <person name="Young S.K."/>
            <person name="Kodira C.D."/>
            <person name="Zeng Q."/>
            <person name="Koehrsen M."/>
            <person name="Alvarado L."/>
            <person name="Berlin A."/>
            <person name="Borenstein D."/>
            <person name="Chen Z."/>
            <person name="Engels R."/>
            <person name="Freedman E."/>
            <person name="Gellesch M."/>
            <person name="Goldberg J."/>
            <person name="Griggs A."/>
            <person name="Gujja S."/>
            <person name="Heiman D."/>
            <person name="Hepburn T."/>
            <person name="Howarth C."/>
            <person name="Jen D."/>
            <person name="Larson L."/>
            <person name="Lewis B."/>
            <person name="Mehta T."/>
            <person name="Park D."/>
            <person name="Pearson M."/>
            <person name="Roberts A."/>
            <person name="Saif S."/>
            <person name="Shea T."/>
            <person name="Shenoy N."/>
            <person name="Sisk P."/>
            <person name="Stolte C."/>
            <person name="Sykes S."/>
            <person name="Walk T."/>
            <person name="White J."/>
            <person name="Yandava C."/>
            <person name="Gilmore M."/>
            <person name="Manson J."/>
            <person name="Palmer K."/>
            <person name="Carniol K."/>
            <person name="Lander E."/>
            <person name="Nusbaum C."/>
            <person name="Galagan J."/>
            <person name="Birren B."/>
        </authorList>
    </citation>
    <scope>NUCLEOTIDE SEQUENCE [GENOMIC DNA]</scope>
    <source>
        <strain>ATCC 4200</strain>
    </source>
</reference>
<reference key="2">
    <citation type="journal article" date="2011" name="J. Biol. Chem.">
        <title>Crystal structure of clustered regularly interspaced short palindromic repeats (CRISPR)-associated Csn2 protein revealed Ca2+-dependent double-stranded DNA binding activity.</title>
        <authorList>
            <person name="Nam K.H."/>
            <person name="Kurinov I."/>
            <person name="Ke A."/>
        </authorList>
    </citation>
    <scope>X-RAY CRYSTALLOGRAPHY (2.70 ANGSTROMS) IN COMPLEX WITH CALCIUM</scope>
    <scope>SUBUNIT</scope>
    <scope>DNA-BINDING</scope>
    <source>
        <strain>ATCC 4200</strain>
    </source>
</reference>
<evidence type="ECO:0000250" key="1"/>
<evidence type="ECO:0000269" key="2">
    <source>
    </source>
</evidence>
<evidence type="ECO:0000305" key="3"/>
<evidence type="ECO:0007829" key="4">
    <source>
        <dbReference type="PDB" id="3S5U"/>
    </source>
</evidence>
<comment type="function">
    <text evidence="1">CRISPR (clustered regularly interspaced short palindromic repeat), is an adaptive immune system that provides protection against mobile genetic elements (viruses, transposable elements and conjugative plasmids). CRISPR clusters contain sequences complementary to antecedent mobile elements and target invading nucleic acids. CRISPR clusters are transcribed and processed into CRISPR RNA (crRNA) (By similarity). Binds dsDNA, binding is disrupted by EGTA.</text>
</comment>
<comment type="cofactor">
    <cofactor>
        <name>Ca(2+)</name>
        <dbReference type="ChEBI" id="CHEBI:29108"/>
    </cofactor>
</comment>
<comment type="subunit">
    <text evidence="2">Homotetramer.</text>
</comment>
<comment type="similarity">
    <text evidence="3">Belongs to the CRISPR-associated Csn2 protein family.</text>
</comment>
<accession>C7UDU4</accession>
<protein>
    <recommendedName>
        <fullName>CRISPR-associated protein Csn2</fullName>
    </recommendedName>
</protein>
<dbReference type="EMBL" id="GG670377">
    <property type="protein sequence ID" value="EEU16261.1"/>
    <property type="molecule type" value="Genomic_DNA"/>
</dbReference>
<dbReference type="PDB" id="3S5U">
    <property type="method" value="X-ray"/>
    <property type="resolution" value="2.70 A"/>
    <property type="chains" value="A/B/C/D/E/F/G/H=1-219"/>
</dbReference>
<dbReference type="PDBsum" id="3S5U"/>
<dbReference type="SMR" id="C7UDU4"/>
<dbReference type="HOGENOM" id="CLU_109392_0_0_9"/>
<dbReference type="EvolutionaryTrace" id="C7UDU4"/>
<dbReference type="GO" id="GO:0003677">
    <property type="term" value="F:DNA binding"/>
    <property type="evidence" value="ECO:0007669"/>
    <property type="project" value="UniProtKB-KW"/>
</dbReference>
<dbReference type="GO" id="GO:0046872">
    <property type="term" value="F:metal ion binding"/>
    <property type="evidence" value="ECO:0007669"/>
    <property type="project" value="UniProtKB-KW"/>
</dbReference>
<dbReference type="GO" id="GO:0051607">
    <property type="term" value="P:defense response to virus"/>
    <property type="evidence" value="ECO:0007669"/>
    <property type="project" value="UniProtKB-KW"/>
</dbReference>
<dbReference type="CDD" id="cd09758">
    <property type="entry name" value="Csn2"/>
    <property type="match status" value="1"/>
</dbReference>
<dbReference type="Gene3D" id="3.40.50.11940">
    <property type="match status" value="2"/>
</dbReference>
<dbReference type="InterPro" id="IPR010146">
    <property type="entry name" value="CRISPR-assoc_prot_Csn2-typ"/>
</dbReference>
<dbReference type="InterPro" id="IPR038600">
    <property type="entry name" value="Csn2_sf"/>
</dbReference>
<dbReference type="NCBIfam" id="TIGR01866">
    <property type="entry name" value="cas_Csn2"/>
    <property type="match status" value="1"/>
</dbReference>
<dbReference type="Pfam" id="PF09711">
    <property type="entry name" value="Cas_Csn2"/>
    <property type="match status" value="1"/>
</dbReference>
<sequence>MRVNFSLLEEPIEIEKATFLTIKDVQSFAHLVKLIYQYDGENELKLFDAQQKGLKPTELFVVTDILGYDVNSAATLKLIYGDLEAQLNDKPEVKSMIEKLTGTISQLIGYELLEHEMDLEEDGIIVQELFKALGIKIETTSDTIFEKVMEITQVHRYLSKKKLLIFINACTYLTEDEVQQVVEYISLNNVDVLFLEQRVVQNRFQYILDENFYLSYEKA</sequence>